<evidence type="ECO:0000250" key="1">
    <source>
        <dbReference type="UniProtKB" id="P15731"/>
    </source>
</evidence>
<evidence type="ECO:0000255" key="2">
    <source>
        <dbReference type="PROSITE-ProRule" id="PRU00388"/>
    </source>
</evidence>
<evidence type="ECO:0000255" key="3">
    <source>
        <dbReference type="PROSITE-ProRule" id="PRU10133"/>
    </source>
</evidence>
<evidence type="ECO:0000269" key="4">
    <source>
    </source>
</evidence>
<evidence type="ECO:0007744" key="5">
    <source>
        <dbReference type="PDB" id="9B55"/>
    </source>
</evidence>
<evidence type="ECO:0007744" key="6">
    <source>
        <dbReference type="PDB" id="9B56"/>
    </source>
</evidence>
<evidence type="ECO:0007744" key="7">
    <source>
        <dbReference type="PDB" id="9B57"/>
    </source>
</evidence>
<evidence type="ECO:0007744" key="8">
    <source>
        <dbReference type="PDB" id="9B58"/>
    </source>
</evidence>
<evidence type="ECO:0007744" key="9">
    <source>
        <dbReference type="PDB" id="9B59"/>
    </source>
</evidence>
<evidence type="ECO:0007744" key="10">
    <source>
        <dbReference type="PDB" id="9B5A"/>
    </source>
</evidence>
<evidence type="ECO:0007744" key="11">
    <source>
        <dbReference type="PDB" id="9B5B"/>
    </source>
</evidence>
<evidence type="ECO:0007744" key="12">
    <source>
        <dbReference type="PDB" id="9B5C"/>
    </source>
</evidence>
<evidence type="ECO:0007744" key="13">
    <source>
        <dbReference type="PDB" id="9B5D"/>
    </source>
</evidence>
<evidence type="ECO:0007744" key="14">
    <source>
        <dbReference type="PDB" id="9B5E"/>
    </source>
</evidence>
<evidence type="ECO:0007744" key="15">
    <source>
        <dbReference type="PDB" id="9B5F"/>
    </source>
</evidence>
<evidence type="ECO:0007829" key="16">
    <source>
        <dbReference type="PDB" id="4II2"/>
    </source>
</evidence>
<feature type="chain" id="PRO_0000082569" description="Ubiquitin-conjugating enzyme E2 4">
    <location>
        <begin position="1"/>
        <end position="147"/>
    </location>
</feature>
<feature type="domain" description="UBC core" evidence="2">
    <location>
        <begin position="1"/>
        <end position="147"/>
    </location>
</feature>
<feature type="active site" description="Glycyl thioester intermediate" evidence="2 3">
    <location>
        <position position="85"/>
    </location>
</feature>
<feature type="mutagenesis site" description="Reduces ubiquitin transfer between ubc4 and pub2. No effect on ubiquitin transfer between ptr3 and ubc4." evidence="4">
    <original>N</original>
    <variation>A</variation>
    <location>
        <position position="81"/>
    </location>
</feature>
<feature type="mutagenesis site" description="Reduces ubiquitin transfer between ubc4 and pub2. Reduces ubiquitin transfer between ptr3 and ubc4." evidence="4">
    <original>S</original>
    <variation>A</variation>
    <location>
        <position position="83"/>
    </location>
</feature>
<feature type="mutagenesis site" description="Reduces ubiquitin transfer between ubc4 and pub2. Reduces ubiquitin transfer between ptr3 and ubc4." evidence="4">
    <original>R</original>
    <variation>A</variation>
    <location>
        <position position="90"/>
    </location>
</feature>
<feature type="mutagenesis site" description="Reduces ubiquitin transfer between ubc4 and pub2. Enhances ubiquitin transfer between ptr3 and ubc4." evidence="4">
    <original>R</original>
    <variation>D</variation>
    <location>
        <position position="90"/>
    </location>
</feature>
<feature type="mutagenesis site" description="Enhances ubiquitin transfer between ubc4 and pub2. Reduces ubiquitin transfer between ptr3 and ubc4." evidence="4">
    <original>D</original>
    <variation>A</variation>
    <location>
        <position position="91"/>
    </location>
</feature>
<feature type="mutagenesis site" description="Reduces ubiquitin transfer between ubc4 and pub2. No effect on ubiquitin transfer between ptr3 and ubc4." evidence="4">
    <original>Q</original>
    <variation>A</variation>
    <location>
        <position position="92"/>
    </location>
</feature>
<feature type="mutagenesis site" description="Reduces ubiquitin transfer between ubc4 and pub2. Enhances ubiquitin transfer between ptr3 and ubc4." evidence="4">
    <original>L</original>
    <variation>D</variation>
    <location>
        <position position="97"/>
    </location>
</feature>
<feature type="mutagenesis site" description="Reduces ubiquitin transfer between ubc4 and pub2. Enhances ubiquitin transfer between ptr3 and ubc4." evidence="4">
    <original>K</original>
    <variation>A</variation>
    <location>
        <position position="101"/>
    </location>
</feature>
<feature type="mutagenesis site" description="Reduces ubiquitin transfer between ubc4 and pub2. No effect on ubiquitin transfer between ptr3 and ubc4." evidence="4">
    <original>S</original>
    <variation>A</variation>
    <location>
        <position position="105"/>
    </location>
</feature>
<feature type="mutagenesis site" description="Reduces ubiquitin transfer between ubc4 and pub2. Enhances ubiquitin transfer between ptr3 and ubc4." evidence="4">
    <original>S</original>
    <variation>F</variation>
    <location>
        <position position="105"/>
    </location>
</feature>
<feature type="mutagenesis site" description="Reduces ubiquitin transfer between ubc4 and pub2. No effect on ubiquitin transfer between ptr3 and ubc4." evidence="4">
    <original>S</original>
    <variation>A</variation>
    <location>
        <position position="108"/>
    </location>
</feature>
<feature type="mutagenesis site" description="Reduces ubiquitin transfer between ubc4 and pub2. Enhances ubiquitin transfer between ptr3 and ubc4." evidence="4">
    <original>S</original>
    <variation>F</variation>
    <location>
        <position position="108"/>
    </location>
</feature>
<feature type="mutagenesis site" description="Reduces ubiquitin transfer between ubc4 and pub2. Reduces ubiquitin transfer between ptr3 and ubc4." evidence="4">
    <original>L</original>
    <variation>A</variation>
    <location>
        <position position="119"/>
    </location>
</feature>
<feature type="helix" evidence="16">
    <location>
        <begin position="2"/>
        <end position="14"/>
    </location>
</feature>
<feature type="strand" evidence="16">
    <location>
        <begin position="20"/>
        <end position="26"/>
    </location>
</feature>
<feature type="strand" evidence="16">
    <location>
        <begin position="29"/>
        <end position="38"/>
    </location>
</feature>
<feature type="turn" evidence="16">
    <location>
        <begin position="44"/>
        <end position="47"/>
    </location>
</feature>
<feature type="strand" evidence="16">
    <location>
        <begin position="49"/>
        <end position="55"/>
    </location>
</feature>
<feature type="turn" evidence="16">
    <location>
        <begin position="58"/>
        <end position="62"/>
    </location>
</feature>
<feature type="strand" evidence="16">
    <location>
        <begin position="66"/>
        <end position="69"/>
    </location>
</feature>
<feature type="helix" evidence="16">
    <location>
        <begin position="87"/>
        <end position="89"/>
    </location>
</feature>
<feature type="turn" evidence="16">
    <location>
        <begin position="90"/>
        <end position="92"/>
    </location>
</feature>
<feature type="helix" evidence="16">
    <location>
        <begin position="99"/>
        <end position="111"/>
    </location>
</feature>
<feature type="helix" evidence="16">
    <location>
        <begin position="121"/>
        <end position="129"/>
    </location>
</feature>
<feature type="helix" evidence="16">
    <location>
        <begin position="131"/>
        <end position="145"/>
    </location>
</feature>
<sequence length="147" mass="16476">MALKRINRELADLGKDPPSSCSAGPVGDDLFHWQATIMGPADSPYAGGVFFLSIHFPTDYPFKPPKVNFTTRIYHPNINSNGSICLDILRDQWSPALTISKVLLSICSLLTDPNPDDPLVPEIAHVYKTDRSRYELSAREWTRKYAI</sequence>
<comment type="function">
    <text evidence="1 4">E2 ubiquitin-conjugating enzyme that catalyzes the covalent attachment of ubiquitin to other proteins (PubMed:39143218). Mediates the selective degradation of short-lived and abnormal proteins (By similarity). Mediates ubiquitination of pex5 (By similarity).</text>
</comment>
<comment type="catalytic activity">
    <reaction evidence="4">
        <text>S-ubiquitinyl-[E1 ubiquitin-activating enzyme]-L-cysteine + [E2 ubiquitin-conjugating enzyme]-L-cysteine = [E1 ubiquitin-activating enzyme]-L-cysteine + S-ubiquitinyl-[E2 ubiquitin-conjugating enzyme]-L-cysteine.</text>
        <dbReference type="EC" id="2.3.2.23"/>
    </reaction>
</comment>
<comment type="pathway">
    <text evidence="4">Protein modification; protein ubiquitination.</text>
</comment>
<comment type="subunit">
    <text evidence="4">Interacts with the E1 ubiquitin-activating enzyme ptr3 and E3 ubiquitin-protein ligase pub2.</text>
</comment>
<comment type="similarity">
    <text evidence="2">Belongs to the ubiquitin-conjugating enzyme family.</text>
</comment>
<protein>
    <recommendedName>
        <fullName>Ubiquitin-conjugating enzyme E2 4</fullName>
        <ecNumber evidence="4">2.3.2.23</ecNumber>
    </recommendedName>
    <alternativeName>
        <fullName>E2 ubiquitin-conjugating enzyme 4</fullName>
    </alternativeName>
    <alternativeName>
        <fullName>Ubiquitin carrier protein 4</fullName>
    </alternativeName>
    <alternativeName>
        <fullName>Ubiquitin-protein ligase 4</fullName>
    </alternativeName>
</protein>
<proteinExistence type="evidence at protein level"/>
<organism>
    <name type="scientific">Schizosaccharomyces pombe (strain 972 / ATCC 24843)</name>
    <name type="common">Fission yeast</name>
    <dbReference type="NCBI Taxonomy" id="284812"/>
    <lineage>
        <taxon>Eukaryota</taxon>
        <taxon>Fungi</taxon>
        <taxon>Dikarya</taxon>
        <taxon>Ascomycota</taxon>
        <taxon>Taphrinomycotina</taxon>
        <taxon>Schizosaccharomycetes</taxon>
        <taxon>Schizosaccharomycetales</taxon>
        <taxon>Schizosaccharomycetaceae</taxon>
        <taxon>Schizosaccharomyces</taxon>
    </lineage>
</organism>
<keyword id="KW-0002">3D-structure</keyword>
<keyword id="KW-0067">ATP-binding</keyword>
<keyword id="KW-0547">Nucleotide-binding</keyword>
<keyword id="KW-1185">Reference proteome</keyword>
<keyword id="KW-0808">Transferase</keyword>
<keyword id="KW-0833">Ubl conjugation pathway</keyword>
<reference key="1">
    <citation type="journal article" date="1995" name="Gene">
        <title>Schizosaccharomyces pombe and Candida albicans cDNA homologues of the Saccharomyces cerevisiae UBC4 gene.</title>
        <authorList>
            <person name="Damagnez V."/>
            <person name="Rolfe M."/>
            <person name="Cottarel G."/>
        </authorList>
    </citation>
    <scope>NUCLEOTIDE SEQUENCE [MRNA]</scope>
</reference>
<reference key="2">
    <citation type="journal article" date="2002" name="Nature">
        <title>The genome sequence of Schizosaccharomyces pombe.</title>
        <authorList>
            <person name="Wood V."/>
            <person name="Gwilliam R."/>
            <person name="Rajandream M.A."/>
            <person name="Lyne M.H."/>
            <person name="Lyne R."/>
            <person name="Stewart A."/>
            <person name="Sgouros J.G."/>
            <person name="Peat N."/>
            <person name="Hayles J."/>
            <person name="Baker S.G."/>
            <person name="Basham D."/>
            <person name="Bowman S."/>
            <person name="Brooks K."/>
            <person name="Brown D."/>
            <person name="Brown S."/>
            <person name="Chillingworth T."/>
            <person name="Churcher C.M."/>
            <person name="Collins M."/>
            <person name="Connor R."/>
            <person name="Cronin A."/>
            <person name="Davis P."/>
            <person name="Feltwell T."/>
            <person name="Fraser A."/>
            <person name="Gentles S."/>
            <person name="Goble A."/>
            <person name="Hamlin N."/>
            <person name="Harris D.E."/>
            <person name="Hidalgo J."/>
            <person name="Hodgson G."/>
            <person name="Holroyd S."/>
            <person name="Hornsby T."/>
            <person name="Howarth S."/>
            <person name="Huckle E.J."/>
            <person name="Hunt S."/>
            <person name="Jagels K."/>
            <person name="James K.D."/>
            <person name="Jones L."/>
            <person name="Jones M."/>
            <person name="Leather S."/>
            <person name="McDonald S."/>
            <person name="McLean J."/>
            <person name="Mooney P."/>
            <person name="Moule S."/>
            <person name="Mungall K.L."/>
            <person name="Murphy L.D."/>
            <person name="Niblett D."/>
            <person name="Odell C."/>
            <person name="Oliver K."/>
            <person name="O'Neil S."/>
            <person name="Pearson D."/>
            <person name="Quail M.A."/>
            <person name="Rabbinowitsch E."/>
            <person name="Rutherford K.M."/>
            <person name="Rutter S."/>
            <person name="Saunders D."/>
            <person name="Seeger K."/>
            <person name="Sharp S."/>
            <person name="Skelton J."/>
            <person name="Simmonds M.N."/>
            <person name="Squares R."/>
            <person name="Squares S."/>
            <person name="Stevens K."/>
            <person name="Taylor K."/>
            <person name="Taylor R.G."/>
            <person name="Tivey A."/>
            <person name="Walsh S.V."/>
            <person name="Warren T."/>
            <person name="Whitehead S."/>
            <person name="Woodward J.R."/>
            <person name="Volckaert G."/>
            <person name="Aert R."/>
            <person name="Robben J."/>
            <person name="Grymonprez B."/>
            <person name="Weltjens I."/>
            <person name="Vanstreels E."/>
            <person name="Rieger M."/>
            <person name="Schaefer M."/>
            <person name="Mueller-Auer S."/>
            <person name="Gabel C."/>
            <person name="Fuchs M."/>
            <person name="Duesterhoeft A."/>
            <person name="Fritzc C."/>
            <person name="Holzer E."/>
            <person name="Moestl D."/>
            <person name="Hilbert H."/>
            <person name="Borzym K."/>
            <person name="Langer I."/>
            <person name="Beck A."/>
            <person name="Lehrach H."/>
            <person name="Reinhardt R."/>
            <person name="Pohl T.M."/>
            <person name="Eger P."/>
            <person name="Zimmermann W."/>
            <person name="Wedler H."/>
            <person name="Wambutt R."/>
            <person name="Purnelle B."/>
            <person name="Goffeau A."/>
            <person name="Cadieu E."/>
            <person name="Dreano S."/>
            <person name="Gloux S."/>
            <person name="Lelaure V."/>
            <person name="Mottier S."/>
            <person name="Galibert F."/>
            <person name="Aves S.J."/>
            <person name="Xiang Z."/>
            <person name="Hunt C."/>
            <person name="Moore K."/>
            <person name="Hurst S.M."/>
            <person name="Lucas M."/>
            <person name="Rochet M."/>
            <person name="Gaillardin C."/>
            <person name="Tallada V.A."/>
            <person name="Garzon A."/>
            <person name="Thode G."/>
            <person name="Daga R.R."/>
            <person name="Cruzado L."/>
            <person name="Jimenez J."/>
            <person name="Sanchez M."/>
            <person name="del Rey F."/>
            <person name="Benito J."/>
            <person name="Dominguez A."/>
            <person name="Revuelta J.L."/>
            <person name="Moreno S."/>
            <person name="Armstrong J."/>
            <person name="Forsburg S.L."/>
            <person name="Cerutti L."/>
            <person name="Lowe T."/>
            <person name="McCombie W.R."/>
            <person name="Paulsen I."/>
            <person name="Potashkin J."/>
            <person name="Shpakovski G.V."/>
            <person name="Ussery D."/>
            <person name="Barrell B.G."/>
            <person name="Nurse P."/>
        </authorList>
    </citation>
    <scope>NUCLEOTIDE SEQUENCE [LARGE SCALE GENOMIC DNA]</scope>
    <source>
        <strain>972 / ATCC 24843</strain>
    </source>
</reference>
<reference evidence="5 6 7 8 9 10 11 12 13 14 15" key="3">
    <citation type="journal article" date="2024" name="Nature">
        <title>Structural basis for transthiolation intermediates in the ubiquitin pathway.</title>
        <authorList>
            <person name="Kochanczyk T."/>
            <person name="Hann Z.S."/>
            <person name="Lux M.C."/>
            <person name="Delos Reyes A.M.V."/>
            <person name="Ji C."/>
            <person name="Tan D.S."/>
            <person name="Lima C.D."/>
        </authorList>
    </citation>
    <scope>STRUCTURE BY ELECTRON MICROSCOPY (2.50 ANGSTROMS) IN COMPLEXES WITH PTR3; PUB2; UEP1 AND UBI4</scope>
    <scope>FUNCTION</scope>
    <scope>CATALYTIC ACTIVITY</scope>
    <scope>INTERACTION WITH PTR3 AND PUB2</scope>
    <scope>PATHWAY</scope>
    <scope>MUTAGENESIS OF ASN-81; SER-83; ARG-90; ASP-91; GLN-92; LEU-97; LYS-101; SER-105; SER-108 AND LEU-119</scope>
</reference>
<name>UBC4_SCHPO</name>
<gene>
    <name type="primary">ubc4</name>
    <name type="ORF">SPBC119.02</name>
</gene>
<accession>P46595</accession>
<dbReference type="EC" id="2.3.2.23" evidence="4"/>
<dbReference type="EMBL" id="L37384">
    <property type="status" value="NOT_ANNOTATED_CDS"/>
    <property type="molecule type" value="mRNA"/>
</dbReference>
<dbReference type="EMBL" id="CU329671">
    <property type="protein sequence ID" value="CAA17917.1"/>
    <property type="molecule type" value="Genomic_DNA"/>
</dbReference>
<dbReference type="PIR" id="T39300">
    <property type="entry name" value="T39300"/>
</dbReference>
<dbReference type="RefSeq" id="NP_595283.1">
    <property type="nucleotide sequence ID" value="NM_001021190.2"/>
</dbReference>
<dbReference type="PDB" id="4II2">
    <property type="method" value="X-ray"/>
    <property type="resolution" value="2.20 A"/>
    <property type="chains" value="C=1-147"/>
</dbReference>
<dbReference type="PDB" id="9B55">
    <property type="method" value="EM"/>
    <property type="resolution" value="3.23 A"/>
    <property type="chains" value="A=1-147"/>
</dbReference>
<dbReference type="PDB" id="9B56">
    <property type="method" value="EM"/>
    <property type="resolution" value="3.35 A"/>
    <property type="chains" value="A=1-147"/>
</dbReference>
<dbReference type="PDB" id="9B57">
    <property type="method" value="EM"/>
    <property type="resolution" value="3.37 A"/>
    <property type="chains" value="A=1-147"/>
</dbReference>
<dbReference type="PDB" id="9B58">
    <property type="method" value="EM"/>
    <property type="resolution" value="3.39 A"/>
    <property type="chains" value="A=1-147"/>
</dbReference>
<dbReference type="PDB" id="9B59">
    <property type="method" value="EM"/>
    <property type="resolution" value="3.49 A"/>
    <property type="chains" value="A=1-147"/>
</dbReference>
<dbReference type="PDB" id="9B5A">
    <property type="method" value="EM"/>
    <property type="resolution" value="3.65 A"/>
    <property type="chains" value="A=1-147"/>
</dbReference>
<dbReference type="PDB" id="9B5B">
    <property type="method" value="EM"/>
    <property type="resolution" value="3.31 A"/>
    <property type="chains" value="A=1-147"/>
</dbReference>
<dbReference type="PDB" id="9B5C">
    <property type="method" value="EM"/>
    <property type="resolution" value="2.50 A"/>
    <property type="chains" value="C=1-147"/>
</dbReference>
<dbReference type="PDB" id="9B5D">
    <property type="method" value="EM"/>
    <property type="resolution" value="2.80 A"/>
    <property type="chains" value="C=1-147"/>
</dbReference>
<dbReference type="PDB" id="9B5E">
    <property type="method" value="EM"/>
    <property type="resolution" value="2.81 A"/>
    <property type="chains" value="C=1-147"/>
</dbReference>
<dbReference type="PDB" id="9B5F">
    <property type="method" value="EM"/>
    <property type="resolution" value="2.78 A"/>
    <property type="chains" value="C=1-147"/>
</dbReference>
<dbReference type="PDB" id="9B5G">
    <property type="method" value="EM"/>
    <property type="resolution" value="2.67 A"/>
    <property type="chains" value="C=1-147"/>
</dbReference>
<dbReference type="PDB" id="9B5H">
    <property type="method" value="EM"/>
    <property type="resolution" value="2.69 A"/>
    <property type="chains" value="C=1-147"/>
</dbReference>
<dbReference type="PDB" id="9B5I">
    <property type="method" value="EM"/>
    <property type="resolution" value="2.70 A"/>
    <property type="chains" value="C=1-147"/>
</dbReference>
<dbReference type="PDB" id="9B5J">
    <property type="method" value="EM"/>
    <property type="resolution" value="2.86 A"/>
    <property type="chains" value="C=1-147"/>
</dbReference>
<dbReference type="PDB" id="9B5K">
    <property type="method" value="EM"/>
    <property type="resolution" value="3.16 A"/>
    <property type="chains" value="C=1-147"/>
</dbReference>
<dbReference type="PDB" id="9B5L">
    <property type="method" value="EM"/>
    <property type="resolution" value="3.30 A"/>
    <property type="chains" value="C=1-147"/>
</dbReference>
<dbReference type="PDB" id="9B5M">
    <property type="method" value="EM"/>
    <property type="resolution" value="2.79 A"/>
    <property type="chains" value="C=1-147"/>
</dbReference>
<dbReference type="PDB" id="9B5N">
    <property type="method" value="EM"/>
    <property type="resolution" value="3.12 A"/>
    <property type="chains" value="C=1-147"/>
</dbReference>
<dbReference type="PDB" id="9B5O">
    <property type="method" value="EM"/>
    <property type="resolution" value="3.19 A"/>
    <property type="chains" value="C=1-147"/>
</dbReference>
<dbReference type="PDB" id="9B5P">
    <property type="method" value="EM"/>
    <property type="resolution" value="3.08 A"/>
    <property type="chains" value="C=1-147"/>
</dbReference>
<dbReference type="PDB" id="9B5Q">
    <property type="method" value="EM"/>
    <property type="resolution" value="2.95 A"/>
    <property type="chains" value="C=1-147"/>
</dbReference>
<dbReference type="PDB" id="9B5R">
    <property type="method" value="EM"/>
    <property type="resolution" value="2.95 A"/>
    <property type="chains" value="C=1-147"/>
</dbReference>
<dbReference type="PDB" id="9B5S">
    <property type="method" value="EM"/>
    <property type="resolution" value="2.96 A"/>
    <property type="chains" value="C=1-147"/>
</dbReference>
<dbReference type="PDB" id="9B5T">
    <property type="method" value="EM"/>
    <property type="resolution" value="3.16 A"/>
    <property type="chains" value="C=1-147"/>
</dbReference>
<dbReference type="PDB" id="9B5U">
    <property type="method" value="EM"/>
    <property type="resolution" value="3.67 A"/>
    <property type="chains" value="C=1-147"/>
</dbReference>
<dbReference type="PDB" id="9B5V">
    <property type="method" value="EM"/>
    <property type="resolution" value="3.94 A"/>
    <property type="chains" value="C=1-147"/>
</dbReference>
<dbReference type="PDB" id="9B5W">
    <property type="method" value="EM"/>
    <property type="resolution" value="3.96 A"/>
    <property type="chains" value="C=1-147"/>
</dbReference>
<dbReference type="PDB" id="9B5X">
    <property type="method" value="EM"/>
    <property type="resolution" value="4.16 A"/>
    <property type="chains" value="C=1-147"/>
</dbReference>
<dbReference type="PDBsum" id="4II2"/>
<dbReference type="PDBsum" id="9B55"/>
<dbReference type="PDBsum" id="9B56"/>
<dbReference type="PDBsum" id="9B57"/>
<dbReference type="PDBsum" id="9B58"/>
<dbReference type="PDBsum" id="9B59"/>
<dbReference type="PDBsum" id="9B5A"/>
<dbReference type="PDBsum" id="9B5B"/>
<dbReference type="PDBsum" id="9B5C"/>
<dbReference type="PDBsum" id="9B5D"/>
<dbReference type="PDBsum" id="9B5E"/>
<dbReference type="PDBsum" id="9B5F"/>
<dbReference type="PDBsum" id="9B5G"/>
<dbReference type="PDBsum" id="9B5H"/>
<dbReference type="PDBsum" id="9B5I"/>
<dbReference type="PDBsum" id="9B5J"/>
<dbReference type="PDBsum" id="9B5K"/>
<dbReference type="PDBsum" id="9B5L"/>
<dbReference type="PDBsum" id="9B5M"/>
<dbReference type="PDBsum" id="9B5N"/>
<dbReference type="PDBsum" id="9B5O"/>
<dbReference type="PDBsum" id="9B5P"/>
<dbReference type="PDBsum" id="9B5Q"/>
<dbReference type="PDBsum" id="9B5R"/>
<dbReference type="PDBsum" id="9B5S"/>
<dbReference type="PDBsum" id="9B5T"/>
<dbReference type="PDBsum" id="9B5U"/>
<dbReference type="PDBsum" id="9B5V"/>
<dbReference type="PDBsum" id="9B5W"/>
<dbReference type="PDBsum" id="9B5X"/>
<dbReference type="EMDB" id="EMD-44200"/>
<dbReference type="EMDB" id="EMD-44201"/>
<dbReference type="EMDB" id="EMD-44202"/>
<dbReference type="EMDB" id="EMD-44203"/>
<dbReference type="EMDB" id="EMD-44204"/>
<dbReference type="EMDB" id="EMD-44205"/>
<dbReference type="EMDB" id="EMD-44206"/>
<dbReference type="EMDB" id="EMD-44207"/>
<dbReference type="EMDB" id="EMD-44208"/>
<dbReference type="EMDB" id="EMD-44209"/>
<dbReference type="EMDB" id="EMD-44210"/>
<dbReference type="EMDB" id="EMD-44211"/>
<dbReference type="EMDB" id="EMD-44212"/>
<dbReference type="EMDB" id="EMD-44213"/>
<dbReference type="EMDB" id="EMD-44214"/>
<dbReference type="EMDB" id="EMD-44215"/>
<dbReference type="EMDB" id="EMD-44216"/>
<dbReference type="EMDB" id="EMD-44217"/>
<dbReference type="EMDB" id="EMD-44218"/>
<dbReference type="EMDB" id="EMD-44219"/>
<dbReference type="EMDB" id="EMD-44220"/>
<dbReference type="EMDB" id="EMD-44221"/>
<dbReference type="EMDB" id="EMD-44222"/>
<dbReference type="EMDB" id="EMD-44223"/>
<dbReference type="EMDB" id="EMD-44224"/>
<dbReference type="EMDB" id="EMD-44225"/>
<dbReference type="EMDB" id="EMD-44226"/>
<dbReference type="EMDB" id="EMD-44227"/>
<dbReference type="EMDB" id="EMD-44228"/>
<dbReference type="SMR" id="P46595"/>
<dbReference type="BioGRID" id="276621">
    <property type="interactions" value="20"/>
</dbReference>
<dbReference type="FunCoup" id="P46595">
    <property type="interactions" value="458"/>
</dbReference>
<dbReference type="IntAct" id="P46595">
    <property type="interactions" value="1"/>
</dbReference>
<dbReference type="STRING" id="284812.P46595"/>
<dbReference type="iPTMnet" id="P46595"/>
<dbReference type="PaxDb" id="4896-SPBC119.02.1"/>
<dbReference type="EnsemblFungi" id="SPBC119.02.1">
    <property type="protein sequence ID" value="SPBC119.02.1:pep"/>
    <property type="gene ID" value="SPBC119.02"/>
</dbReference>
<dbReference type="GeneID" id="2540083"/>
<dbReference type="KEGG" id="spo:2540083"/>
<dbReference type="PomBase" id="SPBC119.02">
    <property type="gene designation" value="ubc4"/>
</dbReference>
<dbReference type="VEuPathDB" id="FungiDB:SPBC119.02"/>
<dbReference type="eggNOG" id="KOG0417">
    <property type="taxonomic scope" value="Eukaryota"/>
</dbReference>
<dbReference type="HOGENOM" id="CLU_030988_13_3_1"/>
<dbReference type="InParanoid" id="P46595"/>
<dbReference type="OMA" id="VHFTTRI"/>
<dbReference type="PhylomeDB" id="P46595"/>
<dbReference type="Reactome" id="R-SPO-8866652">
    <property type="pathway name" value="Synthesis of active ubiquitin: roles of E1 and E2 enzymes"/>
</dbReference>
<dbReference type="Reactome" id="R-SPO-8866654">
    <property type="pathway name" value="E3 ubiquitin ligases ubiquitinate target proteins"/>
</dbReference>
<dbReference type="Reactome" id="R-SPO-9033241">
    <property type="pathway name" value="Peroxisomal protein import"/>
</dbReference>
<dbReference type="Reactome" id="R-SPO-983168">
    <property type="pathway name" value="Antigen processing: Ubiquitination &amp; Proteasome degradation"/>
</dbReference>
<dbReference type="UniPathway" id="UPA00143"/>
<dbReference type="EvolutionaryTrace" id="P46595"/>
<dbReference type="PRO" id="PR:P46595"/>
<dbReference type="Proteomes" id="UP000002485">
    <property type="component" value="Chromosome II"/>
</dbReference>
<dbReference type="GO" id="GO:0005737">
    <property type="term" value="C:cytoplasm"/>
    <property type="evidence" value="ECO:0000314"/>
    <property type="project" value="PomBase"/>
</dbReference>
<dbReference type="GO" id="GO:0005829">
    <property type="term" value="C:cytosol"/>
    <property type="evidence" value="ECO:0007005"/>
    <property type="project" value="PomBase"/>
</dbReference>
<dbReference type="GO" id="GO:0005634">
    <property type="term" value="C:nucleus"/>
    <property type="evidence" value="ECO:0000314"/>
    <property type="project" value="PomBase"/>
</dbReference>
<dbReference type="GO" id="GO:0005524">
    <property type="term" value="F:ATP binding"/>
    <property type="evidence" value="ECO:0007669"/>
    <property type="project" value="UniProtKB-KW"/>
</dbReference>
<dbReference type="GO" id="GO:0061631">
    <property type="term" value="F:ubiquitin conjugating enzyme activity"/>
    <property type="evidence" value="ECO:0000314"/>
    <property type="project" value="PomBase"/>
</dbReference>
<dbReference type="GO" id="GO:0004842">
    <property type="term" value="F:ubiquitin-protein transferase activity"/>
    <property type="evidence" value="ECO:0000250"/>
    <property type="project" value="UniProtKB"/>
</dbReference>
<dbReference type="GO" id="GO:0045842">
    <property type="term" value="P:positive regulation of mitotic metaphase/anaphase transition"/>
    <property type="evidence" value="ECO:0000315"/>
    <property type="project" value="PomBase"/>
</dbReference>
<dbReference type="GO" id="GO:0000209">
    <property type="term" value="P:protein polyubiquitination"/>
    <property type="evidence" value="ECO:0000250"/>
    <property type="project" value="UniProtKB"/>
</dbReference>
<dbReference type="GO" id="GO:0031146">
    <property type="term" value="P:SCF-dependent proteasomal ubiquitin-dependent protein catabolic process"/>
    <property type="evidence" value="ECO:0000314"/>
    <property type="project" value="PomBase"/>
</dbReference>
<dbReference type="GO" id="GO:0032933">
    <property type="term" value="P:SREBP signaling pathway"/>
    <property type="evidence" value="ECO:0000315"/>
    <property type="project" value="PomBase"/>
</dbReference>
<dbReference type="GO" id="GO:0006511">
    <property type="term" value="P:ubiquitin-dependent protein catabolic process"/>
    <property type="evidence" value="ECO:0000315"/>
    <property type="project" value="PomBase"/>
</dbReference>
<dbReference type="CDD" id="cd23792">
    <property type="entry name" value="UBCc_UBE2D"/>
    <property type="match status" value="1"/>
</dbReference>
<dbReference type="FunFam" id="3.10.110.10:FF:000010">
    <property type="entry name" value="Ubiquitin-conjugating enzyme E2-16 kDa"/>
    <property type="match status" value="1"/>
</dbReference>
<dbReference type="Gene3D" id="3.10.110.10">
    <property type="entry name" value="Ubiquitin Conjugating Enzyme"/>
    <property type="match status" value="1"/>
</dbReference>
<dbReference type="InterPro" id="IPR000608">
    <property type="entry name" value="UBQ-conjugat_E2_core"/>
</dbReference>
<dbReference type="InterPro" id="IPR023313">
    <property type="entry name" value="UBQ-conjugating_AS"/>
</dbReference>
<dbReference type="InterPro" id="IPR016135">
    <property type="entry name" value="UBQ-conjugating_enzyme/RWD"/>
</dbReference>
<dbReference type="PANTHER" id="PTHR24068">
    <property type="entry name" value="UBIQUITIN-CONJUGATING ENZYME E2"/>
    <property type="match status" value="1"/>
</dbReference>
<dbReference type="Pfam" id="PF00179">
    <property type="entry name" value="UQ_con"/>
    <property type="match status" value="1"/>
</dbReference>
<dbReference type="SMART" id="SM00212">
    <property type="entry name" value="UBCc"/>
    <property type="match status" value="1"/>
</dbReference>
<dbReference type="SUPFAM" id="SSF54495">
    <property type="entry name" value="UBC-like"/>
    <property type="match status" value="1"/>
</dbReference>
<dbReference type="PROSITE" id="PS00183">
    <property type="entry name" value="UBC_1"/>
    <property type="match status" value="1"/>
</dbReference>
<dbReference type="PROSITE" id="PS50127">
    <property type="entry name" value="UBC_2"/>
    <property type="match status" value="1"/>
</dbReference>